<evidence type="ECO:0000250" key="1"/>
<evidence type="ECO:0000250" key="2">
    <source>
        <dbReference type="UniProtKB" id="Q9NR23"/>
    </source>
</evidence>
<evidence type="ECO:0000255" key="3"/>
<evidence type="ECO:0000269" key="4">
    <source>
    </source>
</evidence>
<evidence type="ECO:0000269" key="5">
    <source>
    </source>
</evidence>
<evidence type="ECO:0000269" key="6">
    <source>
    </source>
</evidence>
<evidence type="ECO:0000269" key="7">
    <source>
    </source>
</evidence>
<evidence type="ECO:0000269" key="8">
    <source>
    </source>
</evidence>
<evidence type="ECO:0000269" key="9">
    <source>
    </source>
</evidence>
<evidence type="ECO:0000305" key="10"/>
<sequence length="366" mass="41586">MQPYQRLLALGFLLLTLPWGQTSEFQDSDLLQFLGLEKAPSPHRFQPVPRVLRKIIRAREAAAASGASQDLCYVKELGVRGNLLQLLPDQGFFLNTQKPFQDGSCLQKVLYFNLSAIKEKAKLTMAQLTLDLGPRSYYNLRPELVVALSVVQDRGVWGRSHPKVGRLLFLRSVPGPQGQLQFNLQGALKDWSSNRLKNLDLHLEILVKEDRYSRVTVQPENPCDRLLRSLHASLLVVTLNPKHCHPSSRKRRAAISVPKGFCRNFCHRHQLFINFQDLGWHKWVIAPKGFMANYCHGECPFSMTTYLNSSNYAFMQALMHMADPKVPKAVCVPTKLSPISMLYQDSDKNVILRHYEDMVVDECGCG</sequence>
<reference key="1">
    <citation type="journal article" date="1993" name="J. Biol. Chem.">
        <title>GDF-3 and GDF-9: two new members of the transforming growth factor-beta superfamily containing a novel pattern of cysteines.</title>
        <authorList>
            <person name="McPherron A.C."/>
            <person name="Lee S.-J."/>
        </authorList>
    </citation>
    <scope>NUCLEOTIDE SEQUENCE [MRNA]</scope>
    <scope>TISSUE SPECIFICITY</scope>
</reference>
<reference key="2">
    <citation type="journal article" date="1992" name="Mol. Endocrinol.">
        <title>Isolation of Vgr-2, a novel member of the transforming growth factor-beta-related gene family.</title>
        <authorList>
            <person name="Jones C.M."/>
            <person name="Simon-Chazottes D."/>
            <person name="Guenet J.-L."/>
            <person name="Hogan B.L."/>
        </authorList>
    </citation>
    <scope>NUCLEOTIDE SEQUENCE [MRNA]</scope>
    <scope>TISSUE SPECIFICITY</scope>
</reference>
<reference key="3">
    <citation type="journal article" date="2005" name="Science">
        <title>The transcriptional landscape of the mammalian genome.</title>
        <authorList>
            <person name="Carninci P."/>
            <person name="Kasukawa T."/>
            <person name="Katayama S."/>
            <person name="Gough J."/>
            <person name="Frith M.C."/>
            <person name="Maeda N."/>
            <person name="Oyama R."/>
            <person name="Ravasi T."/>
            <person name="Lenhard B."/>
            <person name="Wells C."/>
            <person name="Kodzius R."/>
            <person name="Shimokawa K."/>
            <person name="Bajic V.B."/>
            <person name="Brenner S.E."/>
            <person name="Batalov S."/>
            <person name="Forrest A.R."/>
            <person name="Zavolan M."/>
            <person name="Davis M.J."/>
            <person name="Wilming L.G."/>
            <person name="Aidinis V."/>
            <person name="Allen J.E."/>
            <person name="Ambesi-Impiombato A."/>
            <person name="Apweiler R."/>
            <person name="Aturaliya R.N."/>
            <person name="Bailey T.L."/>
            <person name="Bansal M."/>
            <person name="Baxter L."/>
            <person name="Beisel K.W."/>
            <person name="Bersano T."/>
            <person name="Bono H."/>
            <person name="Chalk A.M."/>
            <person name="Chiu K.P."/>
            <person name="Choudhary V."/>
            <person name="Christoffels A."/>
            <person name="Clutterbuck D.R."/>
            <person name="Crowe M.L."/>
            <person name="Dalla E."/>
            <person name="Dalrymple B.P."/>
            <person name="de Bono B."/>
            <person name="Della Gatta G."/>
            <person name="di Bernardo D."/>
            <person name="Down T."/>
            <person name="Engstrom P."/>
            <person name="Fagiolini M."/>
            <person name="Faulkner G."/>
            <person name="Fletcher C.F."/>
            <person name="Fukushima T."/>
            <person name="Furuno M."/>
            <person name="Futaki S."/>
            <person name="Gariboldi M."/>
            <person name="Georgii-Hemming P."/>
            <person name="Gingeras T.R."/>
            <person name="Gojobori T."/>
            <person name="Green R.E."/>
            <person name="Gustincich S."/>
            <person name="Harbers M."/>
            <person name="Hayashi Y."/>
            <person name="Hensch T.K."/>
            <person name="Hirokawa N."/>
            <person name="Hill D."/>
            <person name="Huminiecki L."/>
            <person name="Iacono M."/>
            <person name="Ikeo K."/>
            <person name="Iwama A."/>
            <person name="Ishikawa T."/>
            <person name="Jakt M."/>
            <person name="Kanapin A."/>
            <person name="Katoh M."/>
            <person name="Kawasawa Y."/>
            <person name="Kelso J."/>
            <person name="Kitamura H."/>
            <person name="Kitano H."/>
            <person name="Kollias G."/>
            <person name="Krishnan S.P."/>
            <person name="Kruger A."/>
            <person name="Kummerfeld S.K."/>
            <person name="Kurochkin I.V."/>
            <person name="Lareau L.F."/>
            <person name="Lazarevic D."/>
            <person name="Lipovich L."/>
            <person name="Liu J."/>
            <person name="Liuni S."/>
            <person name="McWilliam S."/>
            <person name="Madan Babu M."/>
            <person name="Madera M."/>
            <person name="Marchionni L."/>
            <person name="Matsuda H."/>
            <person name="Matsuzawa S."/>
            <person name="Miki H."/>
            <person name="Mignone F."/>
            <person name="Miyake S."/>
            <person name="Morris K."/>
            <person name="Mottagui-Tabar S."/>
            <person name="Mulder N."/>
            <person name="Nakano N."/>
            <person name="Nakauchi H."/>
            <person name="Ng P."/>
            <person name="Nilsson R."/>
            <person name="Nishiguchi S."/>
            <person name="Nishikawa S."/>
            <person name="Nori F."/>
            <person name="Ohara O."/>
            <person name="Okazaki Y."/>
            <person name="Orlando V."/>
            <person name="Pang K.C."/>
            <person name="Pavan W.J."/>
            <person name="Pavesi G."/>
            <person name="Pesole G."/>
            <person name="Petrovsky N."/>
            <person name="Piazza S."/>
            <person name="Reed J."/>
            <person name="Reid J.F."/>
            <person name="Ring B.Z."/>
            <person name="Ringwald M."/>
            <person name="Rost B."/>
            <person name="Ruan Y."/>
            <person name="Salzberg S.L."/>
            <person name="Sandelin A."/>
            <person name="Schneider C."/>
            <person name="Schoenbach C."/>
            <person name="Sekiguchi K."/>
            <person name="Semple C.A."/>
            <person name="Seno S."/>
            <person name="Sessa L."/>
            <person name="Sheng Y."/>
            <person name="Shibata Y."/>
            <person name="Shimada H."/>
            <person name="Shimada K."/>
            <person name="Silva D."/>
            <person name="Sinclair B."/>
            <person name="Sperling S."/>
            <person name="Stupka E."/>
            <person name="Sugiura K."/>
            <person name="Sultana R."/>
            <person name="Takenaka Y."/>
            <person name="Taki K."/>
            <person name="Tammoja K."/>
            <person name="Tan S.L."/>
            <person name="Tang S."/>
            <person name="Taylor M.S."/>
            <person name="Tegner J."/>
            <person name="Teichmann S.A."/>
            <person name="Ueda H.R."/>
            <person name="van Nimwegen E."/>
            <person name="Verardo R."/>
            <person name="Wei C.L."/>
            <person name="Yagi K."/>
            <person name="Yamanishi H."/>
            <person name="Zabarovsky E."/>
            <person name="Zhu S."/>
            <person name="Zimmer A."/>
            <person name="Hide W."/>
            <person name="Bult C."/>
            <person name="Grimmond S.M."/>
            <person name="Teasdale R.D."/>
            <person name="Liu E.T."/>
            <person name="Brusic V."/>
            <person name="Quackenbush J."/>
            <person name="Wahlestedt C."/>
            <person name="Mattick J.S."/>
            <person name="Hume D.A."/>
            <person name="Kai C."/>
            <person name="Sasaki D."/>
            <person name="Tomaru Y."/>
            <person name="Fukuda S."/>
            <person name="Kanamori-Katayama M."/>
            <person name="Suzuki M."/>
            <person name="Aoki J."/>
            <person name="Arakawa T."/>
            <person name="Iida J."/>
            <person name="Imamura K."/>
            <person name="Itoh M."/>
            <person name="Kato T."/>
            <person name="Kawaji H."/>
            <person name="Kawagashira N."/>
            <person name="Kawashima T."/>
            <person name="Kojima M."/>
            <person name="Kondo S."/>
            <person name="Konno H."/>
            <person name="Nakano K."/>
            <person name="Ninomiya N."/>
            <person name="Nishio T."/>
            <person name="Okada M."/>
            <person name="Plessy C."/>
            <person name="Shibata K."/>
            <person name="Shiraki T."/>
            <person name="Suzuki S."/>
            <person name="Tagami M."/>
            <person name="Waki K."/>
            <person name="Watahiki A."/>
            <person name="Okamura-Oho Y."/>
            <person name="Suzuki H."/>
            <person name="Kawai J."/>
            <person name="Hayashizaki Y."/>
        </authorList>
    </citation>
    <scope>NUCLEOTIDE SEQUENCE [LARGE SCALE MRNA]</scope>
    <source>
        <strain>C57BL/6J</strain>
        <tissue>Bone marrow</tissue>
    </source>
</reference>
<reference key="4">
    <citation type="journal article" date="2001" name="Cytokine">
        <title>Upregulation of bone morphogenetic protein GDF-3/Vgr-2 expression in adipose tissue of FABP4/aP2 null mice.</title>
        <authorList>
            <person name="Witthuhn B.A."/>
            <person name="Bernlohr D.A."/>
        </authorList>
    </citation>
    <scope>IDENTIFICATION BY MASS SPECTROMETRY</scope>
    <scope>INDUCTION</scope>
</reference>
<reference key="5">
    <citation type="journal article" date="2006" name="Development">
        <title>The Vg1-related protein Gdf3 acts in a Nodal signaling pathway in the pre-gastrulation mouse embryo.</title>
        <authorList>
            <person name="Chen C."/>
            <person name="Ware S.M."/>
            <person name="Sato A."/>
            <person name="Houston-Hawkins D.E."/>
            <person name="Habas R."/>
            <person name="Matzuk M.M."/>
            <person name="Shen M.M."/>
            <person name="Brown C.W."/>
        </authorList>
    </citation>
    <scope>DISRUPTION PHENOTYPE</scope>
    <scope>FUNCTION</scope>
</reference>
<reference key="6">
    <citation type="journal article" date="2007" name="Dev. Biol.">
        <title>Distinct and cooperative roles of mammalian Vg1 homologs GDF1 and GDF3 during early embryonic development.</title>
        <authorList>
            <person name="Andersson O."/>
            <person name="Bertolino P."/>
            <person name="Ibanez C.F."/>
        </authorList>
    </citation>
    <scope>DISRUPTION PHENOTYPE</scope>
    <scope>FUNCTION</scope>
</reference>
<reference key="7">
    <citation type="journal article" date="2008" name="Proc. Natl. Acad. Sci. U.S.A.">
        <title>Growth/differentiation factor 3 signals through ALK7 and regulates accumulation of adipose tissue and diet-induced obesity.</title>
        <authorList>
            <person name="Andersson O."/>
            <person name="Korach-Andre M."/>
            <person name="Reissmann E."/>
            <person name="Ibanez C.F."/>
            <person name="Bertolino P."/>
        </authorList>
    </citation>
    <scope>DISRUPTION PHENOTYPE</scope>
    <scope>FUNCTION</scope>
    <scope>TISSUE SPECIFICITY</scope>
    <scope>LIGAND FOR ACVR1C</scope>
</reference>
<feature type="signal peptide" evidence="3">
    <location>
        <begin position="1"/>
        <end position="22"/>
    </location>
</feature>
<feature type="propeptide" id="PRO_0000033910" evidence="3">
    <location>
        <begin position="23"/>
        <end position="252"/>
    </location>
</feature>
<feature type="chain" id="PRO_0000033911" description="Growth/differentiation factor 3">
    <location>
        <begin position="253"/>
        <end position="366"/>
    </location>
</feature>
<feature type="glycosylation site" description="N-linked (GlcNAc...) asparagine" evidence="3">
    <location>
        <position position="113"/>
    </location>
</feature>
<feature type="glycosylation site" description="N-linked (GlcNAc...) asparagine" evidence="3">
    <location>
        <position position="308"/>
    </location>
</feature>
<feature type="disulfide bond" evidence="1">
    <location>
        <begin position="266"/>
        <end position="331"/>
    </location>
</feature>
<feature type="disulfide bond" evidence="1">
    <location>
        <begin position="295"/>
        <end position="363"/>
    </location>
</feature>
<feature type="disulfide bond" evidence="1">
    <location>
        <begin position="299"/>
        <end position="365"/>
    </location>
</feature>
<feature type="sequence conflict" description="In Ref. 2; AAB24876." evidence="10" ref="2">
    <original>G</original>
    <variation>R</variation>
    <location>
        <position position="165"/>
    </location>
</feature>
<feature type="sequence conflict" description="In Ref. 2; AAB24876." evidence="10" ref="2">
    <original>LL</original>
    <variation>FV</variation>
    <location>
        <begin position="167"/>
        <end position="168"/>
    </location>
</feature>
<feature type="sequence conflict" description="In Ref. 1; AAA53034 and 2; AAB24876." evidence="10" ref="1 2">
    <original>R</original>
    <variation>P</variation>
    <location>
        <position position="225"/>
    </location>
</feature>
<feature type="sequence conflict" description="In Ref. 2; AAB24876." evidence="10" ref="2">
    <original>A</original>
    <variation>R</variation>
    <location>
        <position position="313"/>
    </location>
</feature>
<keyword id="KW-0202">Cytokine</keyword>
<keyword id="KW-0963">Cytoplasm</keyword>
<keyword id="KW-0217">Developmental protein</keyword>
<keyword id="KW-1015">Disulfide bond</keyword>
<keyword id="KW-0325">Glycoprotein</keyword>
<keyword id="KW-0339">Growth factor</keyword>
<keyword id="KW-1185">Reference proteome</keyword>
<keyword id="KW-0964">Secreted</keyword>
<keyword id="KW-0732">Signal</keyword>
<comment type="function">
    <text evidence="6 7 8">Growth factor involved in early embryonic development and adipose-tissue homeostasis. During embryogenesis controls formation of anterior visceral endoderm and mesoderm and the establishment of anterior-posterior identity through a receptor complex comprising the receptor ACVR1B and the coreceptor CRIPTO (PubMed:16368929, PubMed:17936261). Regulates adipose-tissue homeostasis and energy balance under nutrient overload in part by signaling through the receptor complex based on ACVR1C and CRIPTO.</text>
</comment>
<comment type="subunit">
    <text evidence="10">Homodimer. Heterodimer (Potential). But, in contrast to other members of this family, cannot be disulfide-linked.</text>
</comment>
<comment type="subcellular location">
    <subcellularLocation>
        <location evidence="2">Secreted</location>
    </subcellularLocation>
    <subcellularLocation>
        <location evidence="2">Cytoplasm</location>
    </subcellularLocation>
    <text evidence="2">Mainly accumulated in the cytoplasm.</text>
</comment>
<comment type="tissue specificity">
    <text evidence="5 8 9">Primarily in adult bone marrow, spleen, thymus and adipose tissue.</text>
</comment>
<comment type="induction">
    <text evidence="4">Markedly increased in an obese-mouse model lacking adipocyte fatty acid-binding protein FABP4.</text>
</comment>
<comment type="PTM">
    <text evidence="2">Synthesized as large precursor molecule that undergo proteolytic cleavage, releasing the pro-domain from the active, receptor binding, C-terminal region of the molecule.</text>
</comment>
<comment type="disruption phenotype">
    <text evidence="6 7 8">Embryonic lethality in one-third of the mutant embryos because of pregastrulation developmental malformations. However, the majority of mutants survive until adulthood without any overt abnormality (PubMed:16368929, PubMed:17936261). Mutant mice shown resistance to diet-induced obesity (PubMed:18480259).</text>
</comment>
<comment type="miscellaneous">
    <text evidence="2">In contrast to other members of this family, cannot be disulfide-linked due to an atypical cysteine knot configuration, where the fourth cysteine is missing. This fourth cysteine is involved in an inter-molecular bridge to stabilize the active form of homodimeric or heterodimeric signaling molecules.</text>
</comment>
<comment type="similarity">
    <text evidence="10">Belongs to the TGF-beta family.</text>
</comment>
<name>GDF3_MOUSE</name>
<organism>
    <name type="scientific">Mus musculus</name>
    <name type="common">Mouse</name>
    <dbReference type="NCBI Taxonomy" id="10090"/>
    <lineage>
        <taxon>Eukaryota</taxon>
        <taxon>Metazoa</taxon>
        <taxon>Chordata</taxon>
        <taxon>Craniata</taxon>
        <taxon>Vertebrata</taxon>
        <taxon>Euteleostomi</taxon>
        <taxon>Mammalia</taxon>
        <taxon>Eutheria</taxon>
        <taxon>Euarchontoglires</taxon>
        <taxon>Glires</taxon>
        <taxon>Rodentia</taxon>
        <taxon>Myomorpha</taxon>
        <taxon>Muroidea</taxon>
        <taxon>Muridae</taxon>
        <taxon>Murinae</taxon>
        <taxon>Mus</taxon>
        <taxon>Mus</taxon>
    </lineage>
</organism>
<accession>Q07104</accession>
<accession>Q3TUX1</accession>
<protein>
    <recommendedName>
        <fullName>Growth/differentiation factor 3</fullName>
        <shortName>GDF-3</shortName>
    </recommendedName>
    <alternativeName>
        <fullName>VG-1-related protein 2</fullName>
    </alternativeName>
</protein>
<gene>
    <name type="primary">Gdf3</name>
    <name type="synonym">Gdf-3</name>
    <name type="synonym">Vgr-2</name>
</gene>
<proteinExistence type="evidence at protein level"/>
<dbReference type="EMBL" id="L06443">
    <property type="protein sequence ID" value="AAA53034.1"/>
    <property type="molecule type" value="mRNA"/>
</dbReference>
<dbReference type="EMBL" id="S52658">
    <property type="protein sequence ID" value="AAB24876.1"/>
    <property type="molecule type" value="mRNA"/>
</dbReference>
<dbReference type="EMBL" id="AK152457">
    <property type="protein sequence ID" value="BAE31235.1"/>
    <property type="molecule type" value="mRNA"/>
</dbReference>
<dbReference type="EMBL" id="AK160533">
    <property type="protein sequence ID" value="BAE35850.1"/>
    <property type="molecule type" value="mRNA"/>
</dbReference>
<dbReference type="CCDS" id="CCDS20499.1"/>
<dbReference type="PIR" id="A45402">
    <property type="entry name" value="A45402"/>
</dbReference>
<dbReference type="PIR" id="A46607">
    <property type="entry name" value="A46607"/>
</dbReference>
<dbReference type="RefSeq" id="NP_032134.2">
    <property type="nucleotide sequence ID" value="NM_008108.5"/>
</dbReference>
<dbReference type="SMR" id="Q07104"/>
<dbReference type="BioGRID" id="199887">
    <property type="interactions" value="1"/>
</dbReference>
<dbReference type="FunCoup" id="Q07104">
    <property type="interactions" value="435"/>
</dbReference>
<dbReference type="STRING" id="10090.ENSMUSP00000032211"/>
<dbReference type="GlyCosmos" id="Q07104">
    <property type="glycosylation" value="2 sites, No reported glycans"/>
</dbReference>
<dbReference type="GlyGen" id="Q07104">
    <property type="glycosylation" value="3 sites, 1 O-linked glycan (1 site)"/>
</dbReference>
<dbReference type="iPTMnet" id="Q07104"/>
<dbReference type="PhosphoSitePlus" id="Q07104"/>
<dbReference type="PaxDb" id="10090-ENSMUSP00000032211"/>
<dbReference type="PeptideAtlas" id="Q07104"/>
<dbReference type="Antibodypedia" id="11440">
    <property type="antibodies" value="429 antibodies from 32 providers"/>
</dbReference>
<dbReference type="DNASU" id="14562"/>
<dbReference type="Ensembl" id="ENSMUST00000032211.5">
    <property type="protein sequence ID" value="ENSMUSP00000032211.5"/>
    <property type="gene ID" value="ENSMUSG00000030117.6"/>
</dbReference>
<dbReference type="GeneID" id="14562"/>
<dbReference type="KEGG" id="mmu:14562"/>
<dbReference type="UCSC" id="uc009dpm.1">
    <property type="organism name" value="mouse"/>
</dbReference>
<dbReference type="AGR" id="MGI:95686"/>
<dbReference type="CTD" id="9573"/>
<dbReference type="MGI" id="MGI:95686">
    <property type="gene designation" value="Gdf3"/>
</dbReference>
<dbReference type="VEuPathDB" id="HostDB:ENSMUSG00000030117"/>
<dbReference type="eggNOG" id="KOG3900">
    <property type="taxonomic scope" value="Eukaryota"/>
</dbReference>
<dbReference type="GeneTree" id="ENSGT00940000162534"/>
<dbReference type="HOGENOM" id="CLU_020515_4_0_1"/>
<dbReference type="InParanoid" id="Q07104"/>
<dbReference type="OMA" id="LDVAKDW"/>
<dbReference type="OrthoDB" id="5987191at2759"/>
<dbReference type="PhylomeDB" id="Q07104"/>
<dbReference type="TreeFam" id="TF351789"/>
<dbReference type="BioGRID-ORCS" id="14562">
    <property type="hits" value="1 hit in 76 CRISPR screens"/>
</dbReference>
<dbReference type="PRO" id="PR:Q07104"/>
<dbReference type="Proteomes" id="UP000000589">
    <property type="component" value="Chromosome 6"/>
</dbReference>
<dbReference type="RNAct" id="Q07104">
    <property type="molecule type" value="protein"/>
</dbReference>
<dbReference type="Bgee" id="ENSMUSG00000030117">
    <property type="expression patterns" value="Expressed in embryonic cell in blastocyst and 36 other cell types or tissues"/>
</dbReference>
<dbReference type="GO" id="GO:0005737">
    <property type="term" value="C:cytoplasm"/>
    <property type="evidence" value="ECO:0000250"/>
    <property type="project" value="CAFA"/>
</dbReference>
<dbReference type="GO" id="GO:0005615">
    <property type="term" value="C:extracellular space"/>
    <property type="evidence" value="ECO:0007669"/>
    <property type="project" value="UniProtKB-KW"/>
</dbReference>
<dbReference type="GO" id="GO:0005125">
    <property type="term" value="F:cytokine activity"/>
    <property type="evidence" value="ECO:0007669"/>
    <property type="project" value="UniProtKB-KW"/>
</dbReference>
<dbReference type="GO" id="GO:0008083">
    <property type="term" value="F:growth factor activity"/>
    <property type="evidence" value="ECO:0007669"/>
    <property type="project" value="UniProtKB-KW"/>
</dbReference>
<dbReference type="GO" id="GO:0019901">
    <property type="term" value="F:protein kinase binding"/>
    <property type="evidence" value="ECO:0000250"/>
    <property type="project" value="CAFA"/>
</dbReference>
<dbReference type="GO" id="GO:0007492">
    <property type="term" value="P:endoderm development"/>
    <property type="evidence" value="ECO:0000315"/>
    <property type="project" value="MGI"/>
</dbReference>
<dbReference type="GO" id="GO:0001654">
    <property type="term" value="P:eye development"/>
    <property type="evidence" value="ECO:0000250"/>
    <property type="project" value="UniProtKB"/>
</dbReference>
<dbReference type="GO" id="GO:0048859">
    <property type="term" value="P:formation of anatomical boundary"/>
    <property type="evidence" value="ECO:0000315"/>
    <property type="project" value="MGI"/>
</dbReference>
<dbReference type="GO" id="GO:0001701">
    <property type="term" value="P:in utero embryonic development"/>
    <property type="evidence" value="ECO:0000315"/>
    <property type="project" value="MGI"/>
</dbReference>
<dbReference type="GO" id="GO:0007498">
    <property type="term" value="P:mesoderm development"/>
    <property type="evidence" value="ECO:0000315"/>
    <property type="project" value="MGI"/>
</dbReference>
<dbReference type="GO" id="GO:0030514">
    <property type="term" value="P:negative regulation of BMP signaling pathway"/>
    <property type="evidence" value="ECO:0000250"/>
    <property type="project" value="CAFA"/>
</dbReference>
<dbReference type="GO" id="GO:0045605">
    <property type="term" value="P:negative regulation of epidermal cell differentiation"/>
    <property type="evidence" value="ECO:0000250"/>
    <property type="project" value="CAFA"/>
</dbReference>
<dbReference type="GO" id="GO:0045662">
    <property type="term" value="P:negative regulation of myoblast differentiation"/>
    <property type="evidence" value="ECO:0000315"/>
    <property type="project" value="MGI"/>
</dbReference>
<dbReference type="GO" id="GO:0030903">
    <property type="term" value="P:notochord development"/>
    <property type="evidence" value="ECO:0000315"/>
    <property type="project" value="MGI"/>
</dbReference>
<dbReference type="GO" id="GO:0045600">
    <property type="term" value="P:positive regulation of fat cell differentiation"/>
    <property type="evidence" value="ECO:0000315"/>
    <property type="project" value="BHF-UCL"/>
</dbReference>
<dbReference type="GO" id="GO:0090009">
    <property type="term" value="P:primitive streak formation"/>
    <property type="evidence" value="ECO:0000315"/>
    <property type="project" value="MGI"/>
</dbReference>
<dbReference type="GO" id="GO:0010453">
    <property type="term" value="P:regulation of cell fate commitment"/>
    <property type="evidence" value="ECO:0000250"/>
    <property type="project" value="CAFA"/>
</dbReference>
<dbReference type="GO" id="GO:0002021">
    <property type="term" value="P:response to dietary excess"/>
    <property type="evidence" value="ECO:0000315"/>
    <property type="project" value="MGI"/>
</dbReference>
<dbReference type="GO" id="GO:0007165">
    <property type="term" value="P:signal transduction"/>
    <property type="evidence" value="ECO:0000315"/>
    <property type="project" value="MGI"/>
</dbReference>
<dbReference type="GO" id="GO:0001501">
    <property type="term" value="P:skeletal system development"/>
    <property type="evidence" value="ECO:0000250"/>
    <property type="project" value="UniProtKB"/>
</dbReference>
<dbReference type="GO" id="GO:0032525">
    <property type="term" value="P:somite rostral/caudal axis specification"/>
    <property type="evidence" value="ECO:0000315"/>
    <property type="project" value="MGI"/>
</dbReference>
<dbReference type="FunFam" id="2.10.90.10:FF:000001">
    <property type="entry name" value="Bone morphogenetic protein 4"/>
    <property type="match status" value="1"/>
</dbReference>
<dbReference type="FunFam" id="2.60.120.970:FF:000020">
    <property type="entry name" value="growth/differentiation factor 3"/>
    <property type="match status" value="1"/>
</dbReference>
<dbReference type="Gene3D" id="2.60.120.970">
    <property type="match status" value="1"/>
</dbReference>
<dbReference type="Gene3D" id="2.10.90.10">
    <property type="entry name" value="Cystine-knot cytokines"/>
    <property type="match status" value="1"/>
</dbReference>
<dbReference type="InterPro" id="IPR029034">
    <property type="entry name" value="Cystine-knot_cytokine"/>
</dbReference>
<dbReference type="InterPro" id="IPR001839">
    <property type="entry name" value="TGF-b_C"/>
</dbReference>
<dbReference type="InterPro" id="IPR001111">
    <property type="entry name" value="TGF-b_propeptide"/>
</dbReference>
<dbReference type="InterPro" id="IPR015615">
    <property type="entry name" value="TGF-beta-rel"/>
</dbReference>
<dbReference type="InterPro" id="IPR017948">
    <property type="entry name" value="TGFb_CS"/>
</dbReference>
<dbReference type="PANTHER" id="PTHR11848:SF38">
    <property type="entry name" value="GROWTH_DIFFERENTIATION FACTOR 3"/>
    <property type="match status" value="1"/>
</dbReference>
<dbReference type="PANTHER" id="PTHR11848">
    <property type="entry name" value="TGF-BETA FAMILY"/>
    <property type="match status" value="1"/>
</dbReference>
<dbReference type="Pfam" id="PF00019">
    <property type="entry name" value="TGF_beta"/>
    <property type="match status" value="1"/>
</dbReference>
<dbReference type="Pfam" id="PF00688">
    <property type="entry name" value="TGFb_propeptide"/>
    <property type="match status" value="1"/>
</dbReference>
<dbReference type="PRINTS" id="PR00669">
    <property type="entry name" value="INHIBINA"/>
</dbReference>
<dbReference type="SMART" id="SM00204">
    <property type="entry name" value="TGFB"/>
    <property type="match status" value="1"/>
</dbReference>
<dbReference type="SUPFAM" id="SSF57501">
    <property type="entry name" value="Cystine-knot cytokines"/>
    <property type="match status" value="1"/>
</dbReference>
<dbReference type="PROSITE" id="PS00250">
    <property type="entry name" value="TGF_BETA_1"/>
    <property type="match status" value="1"/>
</dbReference>
<dbReference type="PROSITE" id="PS51362">
    <property type="entry name" value="TGF_BETA_2"/>
    <property type="match status" value="1"/>
</dbReference>